<dbReference type="EC" id="2.7.4.25" evidence="1"/>
<dbReference type="EMBL" id="CP000743">
    <property type="protein sequence ID" value="ABR56704.1"/>
    <property type="molecule type" value="Genomic_DNA"/>
</dbReference>
<dbReference type="RefSeq" id="WP_011973836.1">
    <property type="nucleotide sequence ID" value="NC_009635.1"/>
</dbReference>
<dbReference type="SMR" id="A6UW32"/>
<dbReference type="STRING" id="419665.Maeo_1127"/>
<dbReference type="GeneID" id="5327193"/>
<dbReference type="KEGG" id="mae:Maeo_1127"/>
<dbReference type="eggNOG" id="arCOG01037">
    <property type="taxonomic scope" value="Archaea"/>
</dbReference>
<dbReference type="HOGENOM" id="CLU_079959_1_0_2"/>
<dbReference type="OrthoDB" id="31096at2157"/>
<dbReference type="Proteomes" id="UP000001106">
    <property type="component" value="Chromosome"/>
</dbReference>
<dbReference type="GO" id="GO:0005737">
    <property type="term" value="C:cytoplasm"/>
    <property type="evidence" value="ECO:0007669"/>
    <property type="project" value="UniProtKB-SubCell"/>
</dbReference>
<dbReference type="GO" id="GO:0005524">
    <property type="term" value="F:ATP binding"/>
    <property type="evidence" value="ECO:0007669"/>
    <property type="project" value="UniProtKB-UniRule"/>
</dbReference>
<dbReference type="GO" id="GO:0036430">
    <property type="term" value="F:CMP kinase activity"/>
    <property type="evidence" value="ECO:0007669"/>
    <property type="project" value="RHEA"/>
</dbReference>
<dbReference type="GO" id="GO:0036431">
    <property type="term" value="F:dCMP kinase activity"/>
    <property type="evidence" value="ECO:0007669"/>
    <property type="project" value="RHEA"/>
</dbReference>
<dbReference type="GO" id="GO:0006220">
    <property type="term" value="P:pyrimidine nucleotide metabolic process"/>
    <property type="evidence" value="ECO:0007669"/>
    <property type="project" value="UniProtKB-UniRule"/>
</dbReference>
<dbReference type="CDD" id="cd02020">
    <property type="entry name" value="CMPK"/>
    <property type="match status" value="1"/>
</dbReference>
<dbReference type="Gene3D" id="3.40.50.300">
    <property type="entry name" value="P-loop containing nucleotide triphosphate hydrolases"/>
    <property type="match status" value="1"/>
</dbReference>
<dbReference type="HAMAP" id="MF_00239">
    <property type="entry name" value="Cytidyl_kinase_type2"/>
    <property type="match status" value="1"/>
</dbReference>
<dbReference type="InterPro" id="IPR011892">
    <property type="entry name" value="Cyt_kin_arch"/>
</dbReference>
<dbReference type="InterPro" id="IPR011994">
    <property type="entry name" value="Cytidylate_kinase_dom"/>
</dbReference>
<dbReference type="InterPro" id="IPR027417">
    <property type="entry name" value="P-loop_NTPase"/>
</dbReference>
<dbReference type="NCBIfam" id="TIGR02173">
    <property type="entry name" value="cyt_kin_arch"/>
    <property type="match status" value="1"/>
</dbReference>
<dbReference type="Pfam" id="PF13189">
    <property type="entry name" value="Cytidylate_kin2"/>
    <property type="match status" value="1"/>
</dbReference>
<dbReference type="SUPFAM" id="SSF52540">
    <property type="entry name" value="P-loop containing nucleoside triphosphate hydrolases"/>
    <property type="match status" value="1"/>
</dbReference>
<proteinExistence type="inferred from homology"/>
<organism>
    <name type="scientific">Methanococcus aeolicus (strain ATCC BAA-1280 / DSM 17508 / OCM 812 / Nankai-3)</name>
    <dbReference type="NCBI Taxonomy" id="419665"/>
    <lineage>
        <taxon>Archaea</taxon>
        <taxon>Methanobacteriati</taxon>
        <taxon>Methanobacteriota</taxon>
        <taxon>Methanomada group</taxon>
        <taxon>Methanococci</taxon>
        <taxon>Methanococcales</taxon>
        <taxon>Methanococcaceae</taxon>
        <taxon>Methanococcus</taxon>
    </lineage>
</organism>
<comment type="catalytic activity">
    <reaction evidence="1">
        <text>CMP + ATP = CDP + ADP</text>
        <dbReference type="Rhea" id="RHEA:11600"/>
        <dbReference type="ChEBI" id="CHEBI:30616"/>
        <dbReference type="ChEBI" id="CHEBI:58069"/>
        <dbReference type="ChEBI" id="CHEBI:60377"/>
        <dbReference type="ChEBI" id="CHEBI:456216"/>
        <dbReference type="EC" id="2.7.4.25"/>
    </reaction>
</comment>
<comment type="catalytic activity">
    <reaction evidence="1">
        <text>dCMP + ATP = dCDP + ADP</text>
        <dbReference type="Rhea" id="RHEA:25094"/>
        <dbReference type="ChEBI" id="CHEBI:30616"/>
        <dbReference type="ChEBI" id="CHEBI:57566"/>
        <dbReference type="ChEBI" id="CHEBI:58593"/>
        <dbReference type="ChEBI" id="CHEBI:456216"/>
        <dbReference type="EC" id="2.7.4.25"/>
    </reaction>
</comment>
<comment type="subcellular location">
    <subcellularLocation>
        <location evidence="1">Cytoplasm</location>
    </subcellularLocation>
</comment>
<comment type="similarity">
    <text evidence="1">Belongs to the cytidylate kinase family. Type 2 subfamily.</text>
</comment>
<gene>
    <name evidence="1" type="primary">cmk</name>
    <name type="ordered locus">Maeo_1127</name>
</gene>
<reference key="1">
    <citation type="submission" date="2007-06" db="EMBL/GenBank/DDBJ databases">
        <title>Complete sequence of Methanococcus aeolicus Nankai-3.</title>
        <authorList>
            <consortium name="US DOE Joint Genome Institute"/>
            <person name="Copeland A."/>
            <person name="Lucas S."/>
            <person name="Lapidus A."/>
            <person name="Barry K."/>
            <person name="Glavina del Rio T."/>
            <person name="Dalin E."/>
            <person name="Tice H."/>
            <person name="Pitluck S."/>
            <person name="Chain P."/>
            <person name="Malfatti S."/>
            <person name="Shin M."/>
            <person name="Vergez L."/>
            <person name="Schmutz J."/>
            <person name="Larimer F."/>
            <person name="Land M."/>
            <person name="Hauser L."/>
            <person name="Kyrpides N."/>
            <person name="Lykidis A."/>
            <person name="Sieprawska-Lupa M."/>
            <person name="Whitman W.B."/>
            <person name="Richardson P."/>
        </authorList>
    </citation>
    <scope>NUCLEOTIDE SEQUENCE [LARGE SCALE GENOMIC DNA]</scope>
    <source>
        <strain>ATCC BAA-1280 / DSM 17508 / OCM 812 / Nankai-3</strain>
    </source>
</reference>
<sequence>MIITIGGLPGTGTTTIAKLISEKYNLNHVCAGFIFRDMAKEMGMGLQEFSKYAEENPNIDHEIDRKQVELAKEGNIVLEGRLATWMLKKNSVEPTISIWLRAPSMVRCERISERECEDINTALNKMINRENSEKKRYKELYDINIDDLSIYDIIINSSAWNIEGVFSIIDRAIANKSK</sequence>
<feature type="chain" id="PRO_1000005669" description="Cytidylate kinase">
    <location>
        <begin position="1"/>
        <end position="178"/>
    </location>
</feature>
<feature type="binding site" evidence="1">
    <location>
        <begin position="7"/>
        <end position="15"/>
    </location>
    <ligand>
        <name>ATP</name>
        <dbReference type="ChEBI" id="CHEBI:30616"/>
    </ligand>
</feature>
<accession>A6UW32</accession>
<evidence type="ECO:0000255" key="1">
    <source>
        <dbReference type="HAMAP-Rule" id="MF_00239"/>
    </source>
</evidence>
<protein>
    <recommendedName>
        <fullName evidence="1">Cytidylate kinase</fullName>
        <shortName evidence="1">CK</shortName>
        <ecNumber evidence="1">2.7.4.25</ecNumber>
    </recommendedName>
    <alternativeName>
        <fullName evidence="1">Cytidine monophosphate kinase</fullName>
        <shortName evidence="1">CMP kinase</shortName>
    </alternativeName>
</protein>
<keyword id="KW-0067">ATP-binding</keyword>
<keyword id="KW-0963">Cytoplasm</keyword>
<keyword id="KW-0418">Kinase</keyword>
<keyword id="KW-0547">Nucleotide-binding</keyword>
<keyword id="KW-0808">Transferase</keyword>
<name>KCY_META3</name>